<sequence>MPREKVRVLIVDDSASVRQILQTILNDDPDIEVMGTASDPFAAARRLQNEIPDVMILDIEMPRMDGMTFLRKIMAQRPIPVIICSSLTEEGSNVMFEAFEAGAVDIVPKPKIDTRQALLECSTRLREAVKSAARARVRPRAERRVVEKKLTADAIIPPPVQGKVRPTTERIVCIGASTGGTEALNDVLEMLPPHCPPLLIVQHMPAGFTAAFARRLDSVCQIRVKEAEDGEPVLPGSAYIAPGARHMLLQRIGLRYQIAIKDGPPVSRHRPSVDVLFRSAAQHAGANALGVIMTGMGDDGARGMLEMRKLGASTRAQDEDSCVVFGMPKEAIAHGGVEKVVPLHHIPREIMLWYQAGHVAVAG</sequence>
<comment type="function">
    <text evidence="1">Involved in chemotaxis. Part of a chemotaxis signal transduction system that modulates chemotaxis in response to various stimuli. Catalyzes the demethylation of specific methylglutamate residues introduced into the chemoreceptors (methyl-accepting chemotaxis proteins or MCP) by CheR. Also mediates the irreversible deamidation of specific glutamine residues to glutamic acid.</text>
</comment>
<comment type="catalytic activity">
    <reaction evidence="1">
        <text>[protein]-L-glutamate 5-O-methyl ester + H2O = L-glutamyl-[protein] + methanol + H(+)</text>
        <dbReference type="Rhea" id="RHEA:23236"/>
        <dbReference type="Rhea" id="RHEA-COMP:10208"/>
        <dbReference type="Rhea" id="RHEA-COMP:10311"/>
        <dbReference type="ChEBI" id="CHEBI:15377"/>
        <dbReference type="ChEBI" id="CHEBI:15378"/>
        <dbReference type="ChEBI" id="CHEBI:17790"/>
        <dbReference type="ChEBI" id="CHEBI:29973"/>
        <dbReference type="ChEBI" id="CHEBI:82795"/>
        <dbReference type="EC" id="3.1.1.61"/>
    </reaction>
</comment>
<comment type="catalytic activity">
    <reaction evidence="1">
        <text>L-glutaminyl-[protein] + H2O = L-glutamyl-[protein] + NH4(+)</text>
        <dbReference type="Rhea" id="RHEA:16441"/>
        <dbReference type="Rhea" id="RHEA-COMP:10207"/>
        <dbReference type="Rhea" id="RHEA-COMP:10208"/>
        <dbReference type="ChEBI" id="CHEBI:15377"/>
        <dbReference type="ChEBI" id="CHEBI:28938"/>
        <dbReference type="ChEBI" id="CHEBI:29973"/>
        <dbReference type="ChEBI" id="CHEBI:30011"/>
        <dbReference type="EC" id="3.5.1.44"/>
    </reaction>
</comment>
<comment type="subcellular location">
    <subcellularLocation>
        <location evidence="1">Cytoplasm</location>
    </subcellularLocation>
</comment>
<comment type="domain">
    <text evidence="1">Contains a C-terminal catalytic domain, and an N-terminal region which modulates catalytic activity.</text>
</comment>
<comment type="PTM">
    <text evidence="1">Phosphorylated by CheA. Phosphorylation of the N-terminal regulatory domain activates the methylesterase activity.</text>
</comment>
<comment type="miscellaneous">
    <text>B.japonicum does not have a chemotaxis group 1 operon.</text>
</comment>
<comment type="similarity">
    <text evidence="1">Belongs to the CheB family.</text>
</comment>
<name>CHEB3_BRADU</name>
<reference key="1">
    <citation type="journal article" date="2002" name="DNA Res.">
        <title>Complete genomic sequence of nitrogen-fixing symbiotic bacterium Bradyrhizobium japonicum USDA110.</title>
        <authorList>
            <person name="Kaneko T."/>
            <person name="Nakamura Y."/>
            <person name="Sato S."/>
            <person name="Minamisawa K."/>
            <person name="Uchiumi T."/>
            <person name="Sasamoto S."/>
            <person name="Watanabe A."/>
            <person name="Idesawa K."/>
            <person name="Iriguchi M."/>
            <person name="Kawashima K."/>
            <person name="Kohara M."/>
            <person name="Matsumoto M."/>
            <person name="Shimpo S."/>
            <person name="Tsuruoka H."/>
            <person name="Wada T."/>
            <person name="Yamada M."/>
            <person name="Tabata S."/>
        </authorList>
    </citation>
    <scope>NUCLEOTIDE SEQUENCE [LARGE SCALE GENOMIC DNA]</scope>
    <source>
        <strain>JCM 10833 / BCRC 13528 / IAM 13628 / NBRC 14792 / USDA 110</strain>
    </source>
</reference>
<feature type="chain" id="PRO_0000157983" description="Protein-glutamate methylesterase/protein-glutamine glutaminase of group 3 operon">
    <location>
        <begin position="1"/>
        <end position="363"/>
    </location>
</feature>
<feature type="domain" description="Response regulatory" evidence="1">
    <location>
        <begin position="7"/>
        <end position="124"/>
    </location>
</feature>
<feature type="domain" description="CheB-type methylesterase" evidence="1">
    <location>
        <begin position="166"/>
        <end position="357"/>
    </location>
</feature>
<feature type="active site" evidence="1">
    <location>
        <position position="177"/>
    </location>
</feature>
<feature type="active site" evidence="1">
    <location>
        <position position="203"/>
    </location>
</feature>
<feature type="active site" evidence="1">
    <location>
        <position position="299"/>
    </location>
</feature>
<feature type="modified residue" description="4-aspartylphosphate" evidence="1">
    <location>
        <position position="58"/>
    </location>
</feature>
<protein>
    <recommendedName>
        <fullName>Protein-glutamate methylesterase/protein-glutamine glutaminase of group 3 operon</fullName>
        <ecNumber evidence="1">3.1.1.61</ecNumber>
        <ecNumber evidence="1">3.5.1.44</ecNumber>
    </recommendedName>
</protein>
<gene>
    <name evidence="1" type="primary">cheB3</name>
    <name type="ordered locus">blr2349</name>
</gene>
<accession>Q89SQ1</accession>
<dbReference type="EC" id="3.1.1.61" evidence="1"/>
<dbReference type="EC" id="3.5.1.44" evidence="1"/>
<dbReference type="EMBL" id="BA000040">
    <property type="protein sequence ID" value="BAC47614.1"/>
    <property type="molecule type" value="Genomic_DNA"/>
</dbReference>
<dbReference type="RefSeq" id="NP_768989.1">
    <property type="nucleotide sequence ID" value="NC_004463.1"/>
</dbReference>
<dbReference type="RefSeq" id="WP_011085136.1">
    <property type="nucleotide sequence ID" value="NC_004463.1"/>
</dbReference>
<dbReference type="SMR" id="Q89SQ1"/>
<dbReference type="FunCoup" id="Q89SQ1">
    <property type="interactions" value="446"/>
</dbReference>
<dbReference type="STRING" id="224911.AAV28_08635"/>
<dbReference type="EnsemblBacteria" id="BAC47614">
    <property type="protein sequence ID" value="BAC47614"/>
    <property type="gene ID" value="BAC47614"/>
</dbReference>
<dbReference type="GeneID" id="46489390"/>
<dbReference type="KEGG" id="bja:blr2349"/>
<dbReference type="PATRIC" id="fig|224911.44.peg.1896"/>
<dbReference type="eggNOG" id="COG2201">
    <property type="taxonomic scope" value="Bacteria"/>
</dbReference>
<dbReference type="HOGENOM" id="CLU_000445_51_0_5"/>
<dbReference type="InParanoid" id="Q89SQ1"/>
<dbReference type="OrthoDB" id="9793421at2"/>
<dbReference type="PhylomeDB" id="Q89SQ1"/>
<dbReference type="Proteomes" id="UP000002526">
    <property type="component" value="Chromosome"/>
</dbReference>
<dbReference type="GO" id="GO:0005737">
    <property type="term" value="C:cytoplasm"/>
    <property type="evidence" value="ECO:0007669"/>
    <property type="project" value="UniProtKB-SubCell"/>
</dbReference>
<dbReference type="GO" id="GO:0000156">
    <property type="term" value="F:phosphorelay response regulator activity"/>
    <property type="evidence" value="ECO:0007669"/>
    <property type="project" value="InterPro"/>
</dbReference>
<dbReference type="GO" id="GO:0008984">
    <property type="term" value="F:protein-glutamate methylesterase activity"/>
    <property type="evidence" value="ECO:0007669"/>
    <property type="project" value="UniProtKB-UniRule"/>
</dbReference>
<dbReference type="GO" id="GO:0050568">
    <property type="term" value="F:protein-glutamine glutaminase activity"/>
    <property type="evidence" value="ECO:0007669"/>
    <property type="project" value="UniProtKB-UniRule"/>
</dbReference>
<dbReference type="GO" id="GO:0006935">
    <property type="term" value="P:chemotaxis"/>
    <property type="evidence" value="ECO:0007669"/>
    <property type="project" value="UniProtKB-UniRule"/>
</dbReference>
<dbReference type="CDD" id="cd16432">
    <property type="entry name" value="CheB_Rec"/>
    <property type="match status" value="1"/>
</dbReference>
<dbReference type="CDD" id="cd17541">
    <property type="entry name" value="REC_CheB-like"/>
    <property type="match status" value="1"/>
</dbReference>
<dbReference type="Gene3D" id="3.40.50.2300">
    <property type="match status" value="1"/>
</dbReference>
<dbReference type="Gene3D" id="3.40.50.180">
    <property type="entry name" value="Methylesterase CheB, C-terminal domain"/>
    <property type="match status" value="1"/>
</dbReference>
<dbReference type="HAMAP" id="MF_00099">
    <property type="entry name" value="CheB_chemtxs"/>
    <property type="match status" value="1"/>
</dbReference>
<dbReference type="InterPro" id="IPR008248">
    <property type="entry name" value="CheB-like"/>
</dbReference>
<dbReference type="InterPro" id="IPR035909">
    <property type="entry name" value="CheB_C"/>
</dbReference>
<dbReference type="InterPro" id="IPR011006">
    <property type="entry name" value="CheY-like_superfamily"/>
</dbReference>
<dbReference type="InterPro" id="IPR000673">
    <property type="entry name" value="Sig_transdc_resp-reg_Me-estase"/>
</dbReference>
<dbReference type="InterPro" id="IPR001789">
    <property type="entry name" value="Sig_transdc_resp-reg_receiver"/>
</dbReference>
<dbReference type="NCBIfam" id="NF001965">
    <property type="entry name" value="PRK00742.1"/>
    <property type="match status" value="1"/>
</dbReference>
<dbReference type="NCBIfam" id="NF009206">
    <property type="entry name" value="PRK12555.1"/>
    <property type="match status" value="1"/>
</dbReference>
<dbReference type="PANTHER" id="PTHR42872">
    <property type="entry name" value="PROTEIN-GLUTAMATE METHYLESTERASE/PROTEIN-GLUTAMINE GLUTAMINASE"/>
    <property type="match status" value="1"/>
</dbReference>
<dbReference type="PANTHER" id="PTHR42872:SF6">
    <property type="entry name" value="PROTEIN-GLUTAMATE METHYLESTERASE_PROTEIN-GLUTAMINE GLUTAMINASE"/>
    <property type="match status" value="1"/>
</dbReference>
<dbReference type="Pfam" id="PF01339">
    <property type="entry name" value="CheB_methylest"/>
    <property type="match status" value="1"/>
</dbReference>
<dbReference type="Pfam" id="PF00072">
    <property type="entry name" value="Response_reg"/>
    <property type="match status" value="1"/>
</dbReference>
<dbReference type="PIRSF" id="PIRSF000876">
    <property type="entry name" value="RR_chemtxs_CheB"/>
    <property type="match status" value="1"/>
</dbReference>
<dbReference type="SMART" id="SM00448">
    <property type="entry name" value="REC"/>
    <property type="match status" value="1"/>
</dbReference>
<dbReference type="SUPFAM" id="SSF52172">
    <property type="entry name" value="CheY-like"/>
    <property type="match status" value="1"/>
</dbReference>
<dbReference type="SUPFAM" id="SSF52738">
    <property type="entry name" value="Methylesterase CheB, C-terminal domain"/>
    <property type="match status" value="1"/>
</dbReference>
<dbReference type="PROSITE" id="PS50122">
    <property type="entry name" value="CHEB"/>
    <property type="match status" value="1"/>
</dbReference>
<dbReference type="PROSITE" id="PS50110">
    <property type="entry name" value="RESPONSE_REGULATORY"/>
    <property type="match status" value="1"/>
</dbReference>
<evidence type="ECO:0000255" key="1">
    <source>
        <dbReference type="HAMAP-Rule" id="MF_00099"/>
    </source>
</evidence>
<keyword id="KW-0145">Chemotaxis</keyword>
<keyword id="KW-0963">Cytoplasm</keyword>
<keyword id="KW-0378">Hydrolase</keyword>
<keyword id="KW-0597">Phosphoprotein</keyword>
<keyword id="KW-1185">Reference proteome</keyword>
<proteinExistence type="inferred from homology"/>
<organism>
    <name type="scientific">Bradyrhizobium diazoefficiens (strain JCM 10833 / BCRC 13528 / IAM 13628 / NBRC 14792 / USDA 110)</name>
    <dbReference type="NCBI Taxonomy" id="224911"/>
    <lineage>
        <taxon>Bacteria</taxon>
        <taxon>Pseudomonadati</taxon>
        <taxon>Pseudomonadota</taxon>
        <taxon>Alphaproteobacteria</taxon>
        <taxon>Hyphomicrobiales</taxon>
        <taxon>Nitrobacteraceae</taxon>
        <taxon>Bradyrhizobium</taxon>
    </lineage>
</organism>